<dbReference type="EC" id="5.4.2.2" evidence="13"/>
<dbReference type="EC" id="5.4.2.8" evidence="13"/>
<dbReference type="EMBL" id="M60873">
    <property type="protein sequence ID" value="AAA25701.1"/>
    <property type="molecule type" value="Genomic_DNA"/>
</dbReference>
<dbReference type="EMBL" id="AE004091">
    <property type="protein sequence ID" value="AAG08707.1"/>
    <property type="molecule type" value="Genomic_DNA"/>
</dbReference>
<dbReference type="PIR" id="A40013">
    <property type="entry name" value="A40013"/>
</dbReference>
<dbReference type="PIR" id="H82979">
    <property type="entry name" value="H82979"/>
</dbReference>
<dbReference type="PDB" id="1K2Y">
    <property type="method" value="X-ray"/>
    <property type="resolution" value="1.75 A"/>
    <property type="chains" value="X=1-463"/>
</dbReference>
<dbReference type="PDB" id="1K35">
    <property type="method" value="X-ray"/>
    <property type="resolution" value="2.20 A"/>
    <property type="chains" value="A=1-463"/>
</dbReference>
<dbReference type="PDB" id="1P5D">
    <property type="method" value="X-ray"/>
    <property type="resolution" value="1.60 A"/>
    <property type="chains" value="X=1-463"/>
</dbReference>
<dbReference type="PDB" id="1P5G">
    <property type="method" value="X-ray"/>
    <property type="resolution" value="1.61 A"/>
    <property type="chains" value="X=1-463"/>
</dbReference>
<dbReference type="PDB" id="1PCJ">
    <property type="method" value="X-ray"/>
    <property type="resolution" value="2.00 A"/>
    <property type="chains" value="X=1-463"/>
</dbReference>
<dbReference type="PDB" id="1PCM">
    <property type="method" value="X-ray"/>
    <property type="resolution" value="1.90 A"/>
    <property type="chains" value="X=1-463"/>
</dbReference>
<dbReference type="PDB" id="2FKF">
    <property type="method" value="X-ray"/>
    <property type="resolution" value="2.00 A"/>
    <property type="chains" value="A=2-463"/>
</dbReference>
<dbReference type="PDB" id="2FKM">
    <property type="method" value="X-ray"/>
    <property type="resolution" value="1.90 A"/>
    <property type="chains" value="X=2-463"/>
</dbReference>
<dbReference type="PDB" id="2H4L">
    <property type="method" value="X-ray"/>
    <property type="resolution" value="2.40 A"/>
    <property type="chains" value="X=1-463"/>
</dbReference>
<dbReference type="PDB" id="2H5A">
    <property type="method" value="X-ray"/>
    <property type="resolution" value="1.72 A"/>
    <property type="chains" value="X=1-463"/>
</dbReference>
<dbReference type="PDB" id="3BKQ">
    <property type="method" value="X-ray"/>
    <property type="resolution" value="2.05 A"/>
    <property type="chains" value="X=1-463"/>
</dbReference>
<dbReference type="PDB" id="3C04">
    <property type="method" value="X-ray"/>
    <property type="resolution" value="2.20 A"/>
    <property type="chains" value="A=1-463"/>
</dbReference>
<dbReference type="PDB" id="3RSM">
    <property type="method" value="X-ray"/>
    <property type="resolution" value="2.10 A"/>
    <property type="chains" value="A=1-463"/>
</dbReference>
<dbReference type="PDB" id="4IL8">
    <property type="method" value="X-ray"/>
    <property type="resolution" value="1.80 A"/>
    <property type="chains" value="A=1-463"/>
</dbReference>
<dbReference type="PDB" id="4MRQ">
    <property type="method" value="X-ray"/>
    <property type="resolution" value="1.90 A"/>
    <property type="chains" value="A=9-463"/>
</dbReference>
<dbReference type="PDBsum" id="1K2Y"/>
<dbReference type="PDBsum" id="1K35"/>
<dbReference type="PDBsum" id="1P5D"/>
<dbReference type="PDBsum" id="1P5G"/>
<dbReference type="PDBsum" id="1PCJ"/>
<dbReference type="PDBsum" id="1PCM"/>
<dbReference type="PDBsum" id="2FKF"/>
<dbReference type="PDBsum" id="2FKM"/>
<dbReference type="PDBsum" id="2H4L"/>
<dbReference type="PDBsum" id="2H5A"/>
<dbReference type="PDBsum" id="3BKQ"/>
<dbReference type="PDBsum" id="3C04"/>
<dbReference type="PDBsum" id="3RSM"/>
<dbReference type="PDBsum" id="4IL8"/>
<dbReference type="PDBsum" id="4MRQ"/>
<dbReference type="BMRB" id="P26276"/>
<dbReference type="SMR" id="P26276"/>
<dbReference type="FunCoup" id="P26276">
    <property type="interactions" value="338"/>
</dbReference>
<dbReference type="STRING" id="208964.PA5322"/>
<dbReference type="DrugBank" id="DB02007">
    <property type="generic name" value="alpha-D-glucose 6-phosphate"/>
</dbReference>
<dbReference type="DrugBank" id="DB02843">
    <property type="generic name" value="alpha-D-glucose-1-phosphate"/>
</dbReference>
<dbReference type="DrugBank" id="DB02900">
    <property type="generic name" value="alpha-D-mannose 6-phosphate"/>
</dbReference>
<dbReference type="DrugBank" id="DB02867">
    <property type="generic name" value="D-Mannose 1-phosphate"/>
</dbReference>
<dbReference type="DrugBank" id="DB04522">
    <property type="generic name" value="Dexfosfoserine"/>
</dbReference>
<dbReference type="iPTMnet" id="P26276"/>
<dbReference type="PaxDb" id="208964-PA5322"/>
<dbReference type="PseudoCAP" id="PA5322"/>
<dbReference type="HOGENOM" id="CLU_016950_9_1_6"/>
<dbReference type="InParanoid" id="P26276"/>
<dbReference type="PhylomeDB" id="P26276"/>
<dbReference type="BioCyc" id="MetaCyc:MONOMER-19202"/>
<dbReference type="BRENDA" id="5.4.2.2">
    <property type="organism ID" value="5087"/>
</dbReference>
<dbReference type="BRENDA" id="5.4.2.8">
    <property type="organism ID" value="5087"/>
</dbReference>
<dbReference type="SABIO-RK" id="P26276"/>
<dbReference type="UniPathway" id="UPA00030"/>
<dbReference type="UniPathway" id="UPA00126">
    <property type="reaction ID" value="UER00424"/>
</dbReference>
<dbReference type="EvolutionaryTrace" id="P26276"/>
<dbReference type="Proteomes" id="UP000002438">
    <property type="component" value="Chromosome"/>
</dbReference>
<dbReference type="GO" id="GO:0000287">
    <property type="term" value="F:magnesium ion binding"/>
    <property type="evidence" value="ECO:0000314"/>
    <property type="project" value="UniProtKB"/>
</dbReference>
<dbReference type="GO" id="GO:0004614">
    <property type="term" value="F:phosphoglucomutase activity"/>
    <property type="evidence" value="ECO:0000314"/>
    <property type="project" value="UniProtKB"/>
</dbReference>
<dbReference type="GO" id="GO:0004615">
    <property type="term" value="F:phosphomannomutase activity"/>
    <property type="evidence" value="ECO:0000314"/>
    <property type="project" value="UniProtKB"/>
</dbReference>
<dbReference type="GO" id="GO:0042121">
    <property type="term" value="P:alginic acid biosynthetic process"/>
    <property type="evidence" value="ECO:0000315"/>
    <property type="project" value="PseudoCAP"/>
</dbReference>
<dbReference type="GO" id="GO:0009298">
    <property type="term" value="P:GDP-mannose biosynthetic process"/>
    <property type="evidence" value="ECO:0007669"/>
    <property type="project" value="UniProtKB-UniPathway"/>
</dbReference>
<dbReference type="GO" id="GO:0009244">
    <property type="term" value="P:lipopolysaccharide core region biosynthetic process"/>
    <property type="evidence" value="ECO:0000315"/>
    <property type="project" value="PseudoCAP"/>
</dbReference>
<dbReference type="GO" id="GO:0009243">
    <property type="term" value="P:O antigen biosynthetic process"/>
    <property type="evidence" value="ECO:0000315"/>
    <property type="project" value="CACAO"/>
</dbReference>
<dbReference type="CDD" id="cd03089">
    <property type="entry name" value="PMM_PGM"/>
    <property type="match status" value="1"/>
</dbReference>
<dbReference type="FunFam" id="3.40.120.10:FF:000001">
    <property type="entry name" value="Phosphoglucosamine mutase"/>
    <property type="match status" value="1"/>
</dbReference>
<dbReference type="FunFam" id="3.40.120.10:FF:000025">
    <property type="entry name" value="Phosphomannomutase"/>
    <property type="match status" value="1"/>
</dbReference>
<dbReference type="FunFam" id="3.30.310.50:FF:000007">
    <property type="entry name" value="Phosphomannomutase/phosphoglucomutase"/>
    <property type="match status" value="1"/>
</dbReference>
<dbReference type="FunFam" id="3.40.120.10:FF:000021">
    <property type="entry name" value="Phosphomannomutase/phosphoglucomutase"/>
    <property type="match status" value="1"/>
</dbReference>
<dbReference type="Gene3D" id="3.40.120.10">
    <property type="entry name" value="Alpha-D-Glucose-1,6-Bisphosphate, subunit A, domain 3"/>
    <property type="match status" value="3"/>
</dbReference>
<dbReference type="Gene3D" id="3.30.310.50">
    <property type="entry name" value="Alpha-D-phosphohexomutase, C-terminal domain"/>
    <property type="match status" value="1"/>
</dbReference>
<dbReference type="InterPro" id="IPR005844">
    <property type="entry name" value="A-D-PHexomutase_a/b/a-I"/>
</dbReference>
<dbReference type="InterPro" id="IPR016055">
    <property type="entry name" value="A-D-PHexomutase_a/b/a-I/II/III"/>
</dbReference>
<dbReference type="InterPro" id="IPR005845">
    <property type="entry name" value="A-D-PHexomutase_a/b/a-II"/>
</dbReference>
<dbReference type="InterPro" id="IPR005846">
    <property type="entry name" value="A-D-PHexomutase_a/b/a-III"/>
</dbReference>
<dbReference type="InterPro" id="IPR005843">
    <property type="entry name" value="A-D-PHexomutase_C"/>
</dbReference>
<dbReference type="InterPro" id="IPR036900">
    <property type="entry name" value="A-D-PHexomutase_C_sf"/>
</dbReference>
<dbReference type="InterPro" id="IPR016066">
    <property type="entry name" value="A-D-PHexomutase_CS"/>
</dbReference>
<dbReference type="InterPro" id="IPR005841">
    <property type="entry name" value="Alpha-D-phosphohexomutase_SF"/>
</dbReference>
<dbReference type="PANTHER" id="PTHR43771">
    <property type="entry name" value="PHOSPHOMANNOMUTASE"/>
    <property type="match status" value="1"/>
</dbReference>
<dbReference type="PANTHER" id="PTHR43771:SF2">
    <property type="entry name" value="PHOSPHOMANNOMUTASE_PHOSPHOGLUCOMUTASE"/>
    <property type="match status" value="1"/>
</dbReference>
<dbReference type="Pfam" id="PF02878">
    <property type="entry name" value="PGM_PMM_I"/>
    <property type="match status" value="1"/>
</dbReference>
<dbReference type="Pfam" id="PF02879">
    <property type="entry name" value="PGM_PMM_II"/>
    <property type="match status" value="1"/>
</dbReference>
<dbReference type="Pfam" id="PF02880">
    <property type="entry name" value="PGM_PMM_III"/>
    <property type="match status" value="1"/>
</dbReference>
<dbReference type="Pfam" id="PF00408">
    <property type="entry name" value="PGM_PMM_IV"/>
    <property type="match status" value="1"/>
</dbReference>
<dbReference type="PRINTS" id="PR00509">
    <property type="entry name" value="PGMPMM"/>
</dbReference>
<dbReference type="SUPFAM" id="SSF55957">
    <property type="entry name" value="Phosphoglucomutase, C-terminal domain"/>
    <property type="match status" value="1"/>
</dbReference>
<dbReference type="SUPFAM" id="SSF53738">
    <property type="entry name" value="Phosphoglucomutase, first 3 domains"/>
    <property type="match status" value="3"/>
</dbReference>
<dbReference type="PROSITE" id="PS00710">
    <property type="entry name" value="PGM_PMM"/>
    <property type="match status" value="1"/>
</dbReference>
<feature type="initiator methionine" description="Removed" evidence="8">
    <location>
        <position position="1"/>
    </location>
</feature>
<feature type="chain" id="PRO_0000147814" description="Phosphomannomutase/phosphoglucomutase">
    <location>
        <begin position="2"/>
        <end position="463"/>
    </location>
</feature>
<feature type="region of interest" description="Topological domain 1" evidence="15">
    <location>
        <begin position="13"/>
        <end position="142"/>
    </location>
</feature>
<feature type="region of interest" description="Topological domain 2" evidence="15">
    <location>
        <begin position="159"/>
        <end position="255"/>
    </location>
</feature>
<feature type="region of interest" description="Topological domain 3" evidence="15">
    <location>
        <begin position="260"/>
        <end position="364"/>
    </location>
</feature>
<feature type="region of interest" description="Topological domain 4" evidence="15">
    <location>
        <begin position="375"/>
        <end position="453"/>
    </location>
</feature>
<feature type="active site" description="Proton donor" evidence="19">
    <location>
        <position position="20"/>
    </location>
</feature>
<feature type="active site" description="Non-phosphorylated intermediate" evidence="15 16 18">
    <location>
        <position position="108"/>
    </location>
</feature>
<feature type="active site" description="Proton acceptor" evidence="19">
    <location>
        <position position="329"/>
    </location>
</feature>
<feature type="binding site" evidence="4 7 20 28">
    <location>
        <position position="17"/>
    </location>
    <ligand>
        <name>alpha-D-glucose 1-phosphate</name>
        <dbReference type="ChEBI" id="CHEBI:58601"/>
    </ligand>
</feature>
<feature type="binding site" evidence="4 22">
    <location>
        <position position="17"/>
    </location>
    <ligand>
        <name>alpha-D-mannose 1-phosphate</name>
        <dbReference type="ChEBI" id="CHEBI:58409"/>
    </ligand>
</feature>
<feature type="binding site" description="via phosphate group" evidence="3 4 5 6 7 10">
    <location>
        <position position="108"/>
    </location>
    <ligand>
        <name>Mg(2+)</name>
        <dbReference type="ChEBI" id="CHEBI:18420"/>
    </ligand>
</feature>
<feature type="binding site" evidence="3 4 5 6 7 9 10 11">
    <location>
        <position position="242"/>
    </location>
    <ligand>
        <name>Mg(2+)</name>
        <dbReference type="ChEBI" id="CHEBI:18420"/>
    </ligand>
</feature>
<feature type="binding site" evidence="3 4 5 6 7 9 10 11">
    <location>
        <position position="244"/>
    </location>
    <ligand>
        <name>Mg(2+)</name>
        <dbReference type="ChEBI" id="CHEBI:18420"/>
    </ligand>
</feature>
<feature type="binding site" evidence="3 4 5 6 7 9 10 11">
    <location>
        <position position="246"/>
    </location>
    <ligand>
        <name>Mg(2+)</name>
        <dbReference type="ChEBI" id="CHEBI:18420"/>
    </ligand>
</feature>
<feature type="binding site" evidence="4 7 20 28">
    <location>
        <position position="285"/>
    </location>
    <ligand>
        <name>alpha-D-glucose 1-phosphate</name>
        <dbReference type="ChEBI" id="CHEBI:58601"/>
    </ligand>
</feature>
<feature type="binding site" evidence="4 7 20 28">
    <location>
        <position position="308"/>
    </location>
    <ligand>
        <name>alpha-D-glucose 1-phosphate</name>
        <dbReference type="ChEBI" id="CHEBI:58601"/>
    </ligand>
</feature>
<feature type="binding site" evidence="4 22">
    <location>
        <position position="308"/>
    </location>
    <ligand>
        <name>alpha-D-mannose 1-phosphate</name>
        <dbReference type="ChEBI" id="CHEBI:58409"/>
    </ligand>
</feature>
<feature type="binding site" evidence="4 7 20 28">
    <location>
        <begin position="325"/>
        <end position="329"/>
    </location>
    <ligand>
        <name>alpha-D-glucose 1-phosphate</name>
        <dbReference type="ChEBI" id="CHEBI:58601"/>
    </ligand>
</feature>
<feature type="binding site" evidence="4 22">
    <location>
        <begin position="325"/>
        <end position="329"/>
    </location>
    <ligand>
        <name>alpha-D-mannose 1-phosphate</name>
        <dbReference type="ChEBI" id="CHEBI:58409"/>
    </ligand>
</feature>
<feature type="binding site" evidence="4 7 20 28">
    <location>
        <begin position="421"/>
        <end position="425"/>
    </location>
    <ligand>
        <name>alpha-D-glucose 1-phosphate</name>
        <dbReference type="ChEBI" id="CHEBI:58601"/>
    </ligand>
</feature>
<feature type="binding site" evidence="4 22">
    <location>
        <begin position="421"/>
        <end position="425"/>
    </location>
    <ligand>
        <name>alpha-D-mannose 1-phosphate</name>
        <dbReference type="ChEBI" id="CHEBI:58409"/>
    </ligand>
</feature>
<feature type="modified residue" description="Phosphoserine" evidence="3 4 5 6">
    <location>
        <position position="108"/>
    </location>
</feature>
<feature type="mutagenesis site" description="KM halves, decreases processivity as dissociation of G1,6P intermediate increases 25-fold." evidence="5">
    <original>R</original>
    <variation>A</variation>
    <location>
        <position position="15"/>
    </location>
</feature>
<feature type="mutagenesis site" description="No phosphoglucomutase activity." evidence="5">
    <original>R</original>
    <variation>A</variation>
    <location>
        <position position="20"/>
    </location>
</feature>
<feature type="mutagenesis site" description="About 5% activity, still subject to substrate inhibition and requires G1,6P as an activator; phosphorylation occurs at a different site." evidence="2">
    <original>S</original>
    <variation>A</variation>
    <variation>V</variation>
    <location>
        <position position="108"/>
    </location>
</feature>
<feature type="mutagenesis site" description="KM for G1P unchanged, kcat decreases 24-fold; G1,6P stimulates reaction by 2-3 orders of magnitude. No stable protein phosphorylation detected, altered ligation of metal residue." evidence="9">
    <original>S</original>
    <variation>C</variation>
    <location>
        <position position="108"/>
    </location>
</feature>
<feature type="mutagenesis site" description="KM halves, decreases processivity as dissociation of G1,6P intermediate increases 30-fold." evidence="5">
    <original>N</original>
    <variation>A</variation>
    <location>
        <position position="110"/>
    </location>
</feature>
<feature type="mutagenesis site" description="Small reduction in KM, small increase in dissociation of G1,6P intermediate." evidence="5">
    <original>R</original>
    <variation>A</variation>
    <location>
        <position position="247"/>
    </location>
</feature>
<feature type="mutagenesis site" description="Increases KM 2-fold, decreases kcat 9-fold for G1P. Alters flexibility of the hinge region." evidence="7">
    <original>R</original>
    <variation>A</variation>
    <location>
        <position position="262"/>
    </location>
</feature>
<feature type="mutagenesis site" description="Reduces KM and Vmax approximately 2-fold." evidence="4">
    <original>E</original>
    <variation>A</variation>
    <location>
        <position position="325"/>
    </location>
</feature>
<feature type="mutagenesis site" description="No phosphoglucomutase activity using G1P as substrate, protein is less easily phosphorylated, no significant change in structure." evidence="10">
    <original>H</original>
    <variation>A</variation>
    <location>
        <position position="329"/>
    </location>
</feature>
<feature type="mutagenesis site" description="Increases KM 2-fold, decreases kcat 6-fold for G1P. Alters flexibility of the hinge region, structure is less compact." evidence="7">
    <original>P</original>
    <variation>G</variation>
    <location>
        <position position="368"/>
    </location>
</feature>
<feature type="mutagenesis site" description="Loss of phosphomannomutase activity, very low phosphoglucomutase activity." evidence="5 8">
    <original>R</original>
    <variation>C</variation>
    <location>
        <position position="421"/>
    </location>
</feature>
<feature type="sequence conflict" description="In Ref. 1; AAA25701." evidence="14" ref="1">
    <original>A</original>
    <variation>V</variation>
    <location>
        <position position="4"/>
    </location>
</feature>
<feature type="sequence conflict" description="In Ref. 1; AAA25701." evidence="14" ref="1">
    <original>G</original>
    <variation>R</variation>
    <location>
        <position position="21"/>
    </location>
</feature>
<feature type="sequence conflict" description="In Ref. 1; AAA25701." evidence="14" ref="1">
    <original>T</original>
    <variation>P</variation>
    <location>
        <position position="437"/>
    </location>
</feature>
<feature type="helix" evidence="34">
    <location>
        <begin position="11"/>
        <end position="13"/>
    </location>
</feature>
<feature type="strand" evidence="34">
    <location>
        <begin position="16"/>
        <end position="23"/>
    </location>
</feature>
<feature type="turn" evidence="34">
    <location>
        <begin position="24"/>
        <end position="26"/>
    </location>
</feature>
<feature type="helix" evidence="34">
    <location>
        <begin position="29"/>
        <end position="45"/>
    </location>
</feature>
<feature type="strand" evidence="34">
    <location>
        <begin position="50"/>
        <end position="55"/>
    </location>
</feature>
<feature type="helix" evidence="34">
    <location>
        <begin position="61"/>
        <end position="73"/>
    </location>
</feature>
<feature type="turn" evidence="33">
    <location>
        <begin position="74"/>
        <end position="76"/>
    </location>
</feature>
<feature type="strand" evidence="34">
    <location>
        <begin position="78"/>
        <end position="84"/>
    </location>
</feature>
<feature type="helix" evidence="34">
    <location>
        <begin position="87"/>
        <end position="96"/>
    </location>
</feature>
<feature type="strand" evidence="34">
    <location>
        <begin position="100"/>
        <end position="105"/>
    </location>
</feature>
<feature type="strand" evidence="34">
    <location>
        <begin position="114"/>
        <end position="121"/>
    </location>
</feature>
<feature type="helix" evidence="34">
    <location>
        <begin position="129"/>
        <end position="140"/>
    </location>
</feature>
<feature type="strand" evidence="34">
    <location>
        <begin position="149"/>
        <end position="152"/>
    </location>
</feature>
<feature type="helix" evidence="34">
    <location>
        <begin position="156"/>
        <end position="164"/>
    </location>
</feature>
<feature type="strand" evidence="34">
    <location>
        <begin position="173"/>
        <end position="178"/>
    </location>
</feature>
<feature type="helix" evidence="34">
    <location>
        <begin position="183"/>
        <end position="186"/>
    </location>
</feature>
<feature type="helix" evidence="34">
    <location>
        <begin position="188"/>
        <end position="196"/>
    </location>
</feature>
<feature type="strand" evidence="34">
    <location>
        <begin position="197"/>
        <end position="203"/>
    </location>
</feature>
<feature type="strand" evidence="33">
    <location>
        <begin position="211"/>
        <end position="213"/>
    </location>
</feature>
<feature type="helix" evidence="34">
    <location>
        <begin position="220"/>
        <end position="223"/>
    </location>
</feature>
<feature type="helix" evidence="34">
    <location>
        <begin position="224"/>
        <end position="232"/>
    </location>
</feature>
<feature type="strand" evidence="34">
    <location>
        <begin position="236"/>
        <end position="241"/>
    </location>
</feature>
<feature type="strand" evidence="34">
    <location>
        <begin position="245"/>
        <end position="252"/>
    </location>
</feature>
<feature type="helix" evidence="34">
    <location>
        <begin position="260"/>
        <end position="274"/>
    </location>
</feature>
<feature type="strand" evidence="34">
    <location>
        <begin position="279"/>
        <end position="283"/>
    </location>
</feature>
<feature type="helix" evidence="34">
    <location>
        <begin position="289"/>
        <end position="296"/>
    </location>
</feature>
<feature type="strand" evidence="34">
    <location>
        <begin position="300"/>
        <end position="304"/>
    </location>
</feature>
<feature type="helix" evidence="34">
    <location>
        <begin position="308"/>
        <end position="318"/>
    </location>
</feature>
<feature type="strand" evidence="34">
    <location>
        <begin position="321"/>
        <end position="324"/>
    </location>
</feature>
<feature type="strand" evidence="34">
    <location>
        <begin position="328"/>
        <end position="332"/>
    </location>
</feature>
<feature type="turn" evidence="34">
    <location>
        <begin position="333"/>
        <end position="336"/>
    </location>
</feature>
<feature type="strand" evidence="34">
    <location>
        <begin position="338"/>
        <end position="340"/>
    </location>
</feature>
<feature type="helix" evidence="34">
    <location>
        <begin position="342"/>
        <end position="354"/>
    </location>
</feature>
<feature type="strand" evidence="35">
    <location>
        <begin position="356"/>
        <end position="358"/>
    </location>
</feature>
<feature type="helix" evidence="34">
    <location>
        <begin position="360"/>
        <end position="365"/>
    </location>
</feature>
<feature type="strand" evidence="34">
    <location>
        <begin position="376"/>
        <end position="379"/>
    </location>
</feature>
<feature type="turn" evidence="34">
    <location>
        <begin position="382"/>
        <end position="384"/>
    </location>
</feature>
<feature type="helix" evidence="34">
    <location>
        <begin position="385"/>
        <end position="395"/>
    </location>
</feature>
<feature type="strand" evidence="34">
    <location>
        <begin position="400"/>
        <end position="404"/>
    </location>
</feature>
<feature type="strand" evidence="34">
    <location>
        <begin position="406"/>
        <end position="413"/>
    </location>
</feature>
<feature type="strand" evidence="34">
    <location>
        <begin position="416"/>
        <end position="422"/>
    </location>
</feature>
<feature type="strand" evidence="34">
    <location>
        <begin position="424"/>
        <end position="437"/>
    </location>
</feature>
<feature type="helix" evidence="34">
    <location>
        <begin position="438"/>
        <end position="455"/>
    </location>
</feature>
<reference key="1">
    <citation type="journal article" date="1991" name="J. Biol. Chem.">
        <title>Characterization and regulation of the Pseudomonas aeruginosa algC gene encoding phosphomannomutase.</title>
        <authorList>
            <person name="Zielinski N.A."/>
            <person name="Chakrabarty A.M."/>
            <person name="Berry A."/>
        </authorList>
    </citation>
    <scope>NUCLEOTIDE SEQUENCE [GENOMIC DNA]</scope>
    <scope>PROTEIN SEQUENCE OF 2-20</scope>
    <scope>FUNCTION AS A PHOSPHOMANNOMUTASE</scope>
    <scope>MUTAGENESIS OF ARG-421</scope>
    <source>
        <strain>8830</strain>
    </source>
</reference>
<reference key="2">
    <citation type="journal article" date="2000" name="Nature">
        <title>Complete genome sequence of Pseudomonas aeruginosa PAO1, an opportunistic pathogen.</title>
        <authorList>
            <person name="Stover C.K."/>
            <person name="Pham X.-Q.T."/>
            <person name="Erwin A.L."/>
            <person name="Mizoguchi S.D."/>
            <person name="Warrener P."/>
            <person name="Hickey M.J."/>
            <person name="Brinkman F.S.L."/>
            <person name="Hufnagle W.O."/>
            <person name="Kowalik D.J."/>
            <person name="Lagrou M."/>
            <person name="Garber R.L."/>
            <person name="Goltry L."/>
            <person name="Tolentino E."/>
            <person name="Westbrock-Wadman S."/>
            <person name="Yuan Y."/>
            <person name="Brody L.L."/>
            <person name="Coulter S.N."/>
            <person name="Folger K.R."/>
            <person name="Kas A."/>
            <person name="Larbig K."/>
            <person name="Lim R.M."/>
            <person name="Smith K.A."/>
            <person name="Spencer D.H."/>
            <person name="Wong G.K.-S."/>
            <person name="Wu Z."/>
            <person name="Paulsen I.T."/>
            <person name="Reizer J."/>
            <person name="Saier M.H. Jr."/>
            <person name="Hancock R.E.W."/>
            <person name="Lory S."/>
            <person name="Olson M.V."/>
        </authorList>
    </citation>
    <scope>NUCLEOTIDE SEQUENCE [LARGE SCALE GENOMIC DNA]</scope>
    <source>
        <strain>ATCC 15692 / DSM 22644 / CIP 104116 / JCM 14847 / LMG 12228 / 1C / PRS 101 / PAO1</strain>
    </source>
</reference>
<reference key="3">
    <citation type="journal article" date="1994" name="J. Bacteriol.">
        <title>The Pseudomonas aeruginosa algC gene encodes phosphoglucomutase, required for the synthesis of a complete lipopolysaccharide core.</title>
        <authorList>
            <person name="Coyne M.J. Jr."/>
            <person name="Russell K.S."/>
            <person name="Coyle C.L."/>
            <person name="Goldberg J.B."/>
        </authorList>
    </citation>
    <scope>FUNCTION AS A PHOSPHOGLUCOMUTASE</scope>
    <scope>DISRUPTION PHENOTYPE</scope>
    <source>
        <strain>ATCC 15692 / DSM 22644 / CIP 104116 / JCM 14847 / LMG 12228 / 1C / PRS 101 / PAO1</strain>
        <strain>PAC1R</strain>
    </source>
</reference>
<reference key="4">
    <citation type="journal article" date="1994" name="J. Bacteriol.">
        <title>Purification and characterization of phosphomannomutase/phosphoglucomutase from Pseudomonas aeruginosa involved in biosynthesis of both alginate and lipopolysaccharide.</title>
        <authorList>
            <person name="Ye R.W."/>
            <person name="Zielinski N.A."/>
            <person name="Chakrabarty A.M."/>
        </authorList>
    </citation>
    <scope>FUNCTION</scope>
    <scope>ACTIVITY REGULATION</scope>
    <scope>BIOPHYSICOCHEMICAL PROPERTIES</scope>
    <scope>SUBUNIT</scope>
    <scope>DISRUPTION PHENOTYPE</scope>
    <source>
        <strain>8830</strain>
    </source>
</reference>
<reference key="5">
    <citation type="journal article" date="1999" name="FEMS Microbiol. Lett.">
        <title>The Pseudomonas aeruginosa algC gene product participates in rhamnolipid biosynthesis.</title>
        <authorList>
            <person name="Olvera C."/>
            <person name="Goldberg J.B."/>
            <person name="Sanchez R."/>
            <person name="Soberon-Chavez G."/>
        </authorList>
    </citation>
    <scope>FUNCTION</scope>
    <scope>DISRUPTION PHENOTYPE</scope>
    <source>
        <strain>ATCC 15692 / DSM 22644 / CIP 104116 / JCM 14847 / LMG 12228 / 1C / PRS 101 / PAO1</strain>
    </source>
</reference>
<reference key="6">
    <citation type="journal article" date="2001" name="Arch. Biochem. Biophys.">
        <title>Kinetic mechanism and pH dependence of the kinetic parameters of Pseudomonas aeruginosa phosphomannomutase/phosphoglucomutase.</title>
        <authorList>
            <person name="Naught L.E."/>
            <person name="Tipton P.A."/>
        </authorList>
    </citation>
    <scope>FUNCTION</scope>
    <scope>ACTIVITY REGULATION</scope>
    <scope>BIOPHYSICOCHEMICAL PROPERTIES</scope>
    <scope>POSSIBLE REACTION MECHANISM</scope>
    <scope>MASS SPECTROMETRY</scope>
    <scope>PHOSPHORYLATION</scope>
    <scope>MUTAGENESIS OF SER-108</scope>
    <source>
        <strain>ATCC 15692 / DSM 22644 / CIP 104116 / JCM 14847 / LMG 12228 / 1C / PRS 101 / PAO1</strain>
    </source>
</reference>
<reference key="7">
    <citation type="journal article" date="2002" name="Structure">
        <title>Crystal structure of PMM/PGM: an enzyme in the biosynthetic pathway of P. aeruginosa virulence factors.</title>
        <authorList>
            <person name="Regni C."/>
            <person name="Tipton P.A."/>
            <person name="Beamer L.J."/>
        </authorList>
    </citation>
    <scope>X-RAY CRYSTALLOGRAPHY (1.75 ANGSTROMS) IN COMPLEX WITH METAL OF WILD-TYPE AND ASP-108 MUTANT</scope>
    <scope>DOMAIN</scope>
    <scope>ACTIVE SITE</scope>
    <scope>PHOSPHORYLATION AT SER-108</scope>
    <source>
        <strain>ATCC 15692 / DSM 22644 / CIP 104116 / JCM 14847 / LMG 12228 / 1C / PRS 101 / PAO1</strain>
    </source>
</reference>
<reference evidence="20 21 22 23" key="8">
    <citation type="journal article" date="2004" name="Structure">
        <title>Structural basis of diverse substrate recognition by the enzyme PMM/PGM from P. aeruginosa.</title>
        <authorList>
            <person name="Regni C."/>
            <person name="Naught L."/>
            <person name="Tipton P.A."/>
            <person name="Beamer L.J."/>
        </authorList>
    </citation>
    <scope>X-RAY CRYSTALLOGRAPHY (1.60 ANGSTROMS) IN COMPLEXES WITH ZINC; ALPHA-D-GLUCOSE-1-PHOSPHATE; ALPHA-D-GLUCOSE-6-PHOSPHATE; ZINC; ALPHA-D-MANNOSE 1-PHOSPHATE AND ALPHA-D-MANNOSE 6-PHOSPHATE</scope>
    <scope>COFACTOR</scope>
    <scope>ACTIVE SITE</scope>
    <scope>PHOSPHORYLATION AT SER-108</scope>
    <scope>MUTAGENESIS OF GLU-325</scope>
</reference>
<reference evidence="26 27" key="9">
    <citation type="journal article" date="2006" name="Acta Crystallogr. F">
        <title>Complexes of the enzyme phosphomannomutase/phosphoglucomutase with a slow substrate and an inhibitor.</title>
        <authorList>
            <person name="Regni C."/>
            <person name="Shackelford G.S."/>
            <person name="Beamer L.J."/>
        </authorList>
    </citation>
    <scope>X-RAY CRYSTALLOGRAPHY (1.72 ANGSTROMS) IN COMPLEXES WITH ZINC; ALPHA-D-RIBOSE 1-PHOSPHATE AND ALPHA-D-XYLOSE 1-PHOSPHATE</scope>
    <scope>FUNCTION</scope>
    <scope>COFACTOR</scope>
    <scope>ACTIVITY REGULATION</scope>
    <scope>ACTIVE SITE</scope>
    <scope>PHOSPHORYLATION AT SER-108</scope>
</reference>
<reference evidence="24 25" key="10">
    <citation type="journal article" date="2006" name="J. Biol. Chem.">
        <title>The reaction of phosphohexomutase from Pseudomonas aeruginosa: structural insights into a simple processive enzyme.</title>
        <authorList>
            <person name="Regni C."/>
            <person name="Schramm A.M."/>
            <person name="Beamer L.J."/>
        </authorList>
    </citation>
    <scope>X-RAY CRYSTALLOGRAPHY (1.90 ANGSTROMS) OF 2-463 IN COMPLEX WITH METAL AND REACTION INTERMEDIATE</scope>
    <scope>FUNCTION</scope>
    <scope>COFACTOR</scope>
    <scope>REACTION MECHANISM</scope>
    <scope>BIOPHYSICOCHEMICAL PROPERTIES</scope>
    <scope>PHOSPHORYLATION AT SER-108</scope>
    <scope>MUTAGENESIS OF ARG-15; ARG-20; ASN-110; ARG-247 AND ARG-421</scope>
</reference>
<reference evidence="28 29" key="11">
    <citation type="journal article" date="2008" name="Biochemistry">
        <title>Backbone flexibility, conformational change, and catalysis in a phosphohexomutase from Pseudomonas aeruginosa.</title>
        <authorList>
            <person name="Schramm A.M."/>
            <person name="Mehra-Chaudhary R."/>
            <person name="Furdui C.M."/>
            <person name="Beamer L.J."/>
        </authorList>
    </citation>
    <scope>X-RAY CRYSTALLOGRAPHY (2.05 ANGSTROMS) OF GLY-368 MUTANT IN COMPLEX WITH METAL OF APOPROTEIN AND IN COMPLEX WITH ALPHA-D-GLUCOSE-1-PHOSPHATE</scope>
    <scope>FUNCTION</scope>
    <scope>COFACTOR</scope>
    <scope>DOMAIN</scope>
    <scope>MUTAGENESIS OF ARG-262 AND PRO-368</scope>
</reference>
<reference evidence="30" key="12">
    <citation type="journal article" date="2012" name="Biochemistry">
        <title>Solution NMR of a 463-residue phosphohexomutase: domain 4 mobility, substates, and phosphoryl transfer defect.</title>
        <authorList>
            <person name="Sarma A.V."/>
            <person name="Anbanandam A."/>
            <person name="Kelm A."/>
            <person name="Mehra-Chaudhary R."/>
            <person name="Wei Y."/>
            <person name="Qin P."/>
            <person name="Lee Y."/>
            <person name="Berjanskii M.V."/>
            <person name="Mick J.A."/>
            <person name="Beamer L.J."/>
            <person name="Van Doren S.R."/>
        </authorList>
    </citation>
    <scope>X-RAY CRYSTALLOGRAPHY (2.10 ANGSTROMS) OF CYS-108 MUTANT IN COMPLEX WITH METAL</scope>
    <scope>FUNCTION</scope>
    <scope>DOMAIN</scope>
    <scope>MUTAGENESIS OF SER-108</scope>
</reference>
<reference evidence="31" key="13">
    <citation type="journal article" date="2013" name="FEBS J.">
        <title>Identification of an essential active-site residue in the alpha-D-phosphohexomutase enzyme superfamily.</title>
        <authorList>
            <person name="Lee Y."/>
            <person name="Mehra-Chaudhary R."/>
            <person name="Furdui C."/>
            <person name="Beamer L.J."/>
        </authorList>
    </citation>
    <scope>X-RAY CRYSTALLOGRAPHY (1.80 ANGSTROMS) OF ALA-329 MUTANT IN COMPLEX WITH MAGNESIUM</scope>
    <scope>FUNCTION</scope>
    <scope>COFACTOR</scope>
    <scope>REACTION MECHANISM</scope>
    <scope>ACTIVE SITE</scope>
    <scope>MUTAGENESIS OF HIS-329</scope>
</reference>
<reference evidence="32" key="14">
    <citation type="journal article" date="2014" name="J. Biol. Chem.">
        <title>Promotion of enzyme flexibility by dephosphorylation and coupling to the catalytic mechanism of a phosphohexomutase.</title>
        <authorList>
            <person name="Lee Y."/>
            <person name="Villar M.T."/>
            <person name="Artigues A."/>
            <person name="Beamer L.J."/>
        </authorList>
    </citation>
    <scope>X-RAY CRYSTALLOGRAPHY (1.90 ANGSTROMS) OF DEPHOSPHORYLATED PROTEIN IN COMPLEX WITH METAL</scope>
    <scope>BIOPHYSICOCHEMICAL PROPERTIES</scope>
</reference>
<accession>P26276</accession>
<evidence type="ECO:0000269" key="1">
    <source>
    </source>
</evidence>
<evidence type="ECO:0000269" key="2">
    <source>
    </source>
</evidence>
<evidence type="ECO:0000269" key="3">
    <source>
    </source>
</evidence>
<evidence type="ECO:0000269" key="4">
    <source>
    </source>
</evidence>
<evidence type="ECO:0000269" key="5">
    <source>
    </source>
</evidence>
<evidence type="ECO:0000269" key="6">
    <source>
    </source>
</evidence>
<evidence type="ECO:0000269" key="7">
    <source>
    </source>
</evidence>
<evidence type="ECO:0000269" key="8">
    <source>
    </source>
</evidence>
<evidence type="ECO:0000269" key="9">
    <source>
    </source>
</evidence>
<evidence type="ECO:0000269" key="10">
    <source>
    </source>
</evidence>
<evidence type="ECO:0000269" key="11">
    <source>
    </source>
</evidence>
<evidence type="ECO:0000269" key="12">
    <source>
    </source>
</evidence>
<evidence type="ECO:0000269" key="13">
    <source>
    </source>
</evidence>
<evidence type="ECO:0000305" key="14"/>
<evidence type="ECO:0000305" key="15">
    <source>
    </source>
</evidence>
<evidence type="ECO:0000305" key="16">
    <source>
    </source>
</evidence>
<evidence type="ECO:0000305" key="17">
    <source>
    </source>
</evidence>
<evidence type="ECO:0000305" key="18">
    <source>
    </source>
</evidence>
<evidence type="ECO:0000305" key="19">
    <source>
    </source>
</evidence>
<evidence type="ECO:0007744" key="20">
    <source>
        <dbReference type="PDB" id="1P5D"/>
    </source>
</evidence>
<evidence type="ECO:0007744" key="21">
    <source>
        <dbReference type="PDB" id="1P5G"/>
    </source>
</evidence>
<evidence type="ECO:0007744" key="22">
    <source>
        <dbReference type="PDB" id="1PCJ"/>
    </source>
</evidence>
<evidence type="ECO:0007744" key="23">
    <source>
        <dbReference type="PDB" id="1PCM"/>
    </source>
</evidence>
<evidence type="ECO:0007744" key="24">
    <source>
        <dbReference type="PDB" id="2FKF"/>
    </source>
</evidence>
<evidence type="ECO:0007744" key="25">
    <source>
        <dbReference type="PDB" id="2FKM"/>
    </source>
</evidence>
<evidence type="ECO:0007744" key="26">
    <source>
        <dbReference type="PDB" id="2H4L"/>
    </source>
</evidence>
<evidence type="ECO:0007744" key="27">
    <source>
        <dbReference type="PDB" id="2H5A"/>
    </source>
</evidence>
<evidence type="ECO:0007744" key="28">
    <source>
        <dbReference type="PDB" id="3BKQ"/>
    </source>
</evidence>
<evidence type="ECO:0007744" key="29">
    <source>
        <dbReference type="PDB" id="3C04"/>
    </source>
</evidence>
<evidence type="ECO:0007744" key="30">
    <source>
        <dbReference type="PDB" id="3RSM"/>
    </source>
</evidence>
<evidence type="ECO:0007744" key="31">
    <source>
        <dbReference type="PDB" id="4IL8"/>
    </source>
</evidence>
<evidence type="ECO:0007744" key="32">
    <source>
        <dbReference type="PDB" id="4MRQ"/>
    </source>
</evidence>
<evidence type="ECO:0007829" key="33">
    <source>
        <dbReference type="PDB" id="1K35"/>
    </source>
</evidence>
<evidence type="ECO:0007829" key="34">
    <source>
        <dbReference type="PDB" id="1P5D"/>
    </source>
</evidence>
<evidence type="ECO:0007829" key="35">
    <source>
        <dbReference type="PDB" id="2H4L"/>
    </source>
</evidence>
<comment type="function">
    <text evidence="1 2 5 6 7 8 9 10 12 13">Highly reversible phosphoryltransferase. The phosphomannomutase activity produces a precursor for alginate polymerization, the alginate layer causes a mucoid phenotype and provides a protective barrier against host immune defenses and antibiotics. Also involved in core lipopolysaccaride (LPS) biosynthesis due to its phosphoglucomutase activity. Essential for rhamnolipid production, an exoproduct correlated with pathogenicity (PubMed:10481091). Required for biofilm production. The reaction proceeds via 2 processive phosphoryl transferase reactions; first from enzyme-phospho-Ser-108 to the substrate (generating a bisphosphorylated substrate intermediate and a dephosphorylated enzyme), a 180 degree rotation of the intermediate (probably aided by movement of domain 4), and subsequent transfer of phosphate back to the enzyme (PubMed:11716469, PubMed:16595672, PubMed:16880541, PubMed:22242625).</text>
</comment>
<comment type="catalytic activity">
    <reaction evidence="13">
        <text>alpha-D-mannose 1-phosphate = D-mannose 6-phosphate</text>
        <dbReference type="Rhea" id="RHEA:11140"/>
        <dbReference type="ChEBI" id="CHEBI:58409"/>
        <dbReference type="ChEBI" id="CHEBI:58735"/>
        <dbReference type="EC" id="5.4.2.8"/>
    </reaction>
</comment>
<comment type="catalytic activity">
    <reaction evidence="13">
        <text>alpha-D-glucose 1-phosphate = alpha-D-glucose 6-phosphate</text>
        <dbReference type="Rhea" id="RHEA:23536"/>
        <dbReference type="ChEBI" id="CHEBI:58225"/>
        <dbReference type="ChEBI" id="CHEBI:58601"/>
        <dbReference type="EC" id="5.4.2.2"/>
    </reaction>
</comment>
<comment type="cofactor">
    <cofactor evidence="10">
        <name>Mg(2+)</name>
        <dbReference type="ChEBI" id="CHEBI:18420"/>
    </cofactor>
    <text evidence="10 16 17 18">Binds 1 Mg(2+) ion per subunit (PubMed:23517223). Zn(2+) can substitute, but yields a catalytically inactive enzyme (PubMed:14725765, PubMed:16595672, PubMed:16880541).</text>
</comment>
<comment type="activity regulation">
    <text evidence="2 13 18">Requires glucose 1,6-bisphosphate (G1,6P) as an activator (PubMed:11716469, PubMed:8050998). Reaction making glucose 6-phosphate is subject to substrate inhibition, reactions making mannose 1-phosphate or glucose 1-phosphate are not. 1-deoxyglucose 6-phosphate competitively inhibits glucose 1-phosphate (PubMed:11716469). Inhibited by xylose 1-phosphate (PubMed:16880541).</text>
</comment>
<comment type="biophysicochemical properties">
    <kinetics>
        <KM evidence="13">22 uM for glucose 1-phosphate</KM>
        <KM evidence="13">17 uM for mannose 1-phosphate</KM>
        <KM evidence="2">5.4 uM for glucose 1-phosphate</KM>
        <KM evidence="2">0.38 mM for glucose 6-phosphate</KM>
        <KM evidence="2">0.51 mM for mannose 6-phosphate</KM>
        <KM evidence="5">27.3 uM for glucose 6-phosphate</KM>
        <text evidence="13">kcat is 3000 min(-1) for glucose 1-phosphate and 1350 min(-1) for mannose 1-phosphate.</text>
    </kinetics>
    <temperatureDependence>
        <text evidence="11">TM is 66 degrees Celsius for phosphorylated protein and 62 degrees Celsius for unphosphorylated protein.</text>
    </temperatureDependence>
</comment>
<comment type="pathway">
    <text>Nucleotide-sugar biosynthesis; GDP-alpha-D-mannose biosynthesis; alpha-D-mannose 1-phosphate from D-fructose 6-phosphate: step 2/2.</text>
</comment>
<comment type="pathway">
    <text>Bacterial outer membrane biogenesis; lipopolysaccharide biosynthesis.</text>
</comment>
<comment type="subunit">
    <text evidence="13">Monomer.</text>
</comment>
<comment type="induction">
    <text>By D-mannose 6-phosphate.</text>
</comment>
<comment type="domain">
    <text evidence="3 7 9">Consists of 4 domains; domains 1-3 have a similar toplological core while domain 4 folds over and closes the active site from a hinge region. Mutants in the hinge region (residues 262 and 368-369) generally increase KM for glucose 1-phosphate 2-fold while reducing kcat about 10-fold (PubMed:18690721).</text>
</comment>
<comment type="mass spectrometry" mass="50220.0" method="MALDI" evidence="2">
    <text>May be phosphorylated, protein expressed in E.coli.</text>
</comment>
<comment type="disruption phenotype">
    <text evidence="1 12 13">No longer expresses O-antigen LPS side chain or A-band LPS, sensitive to serum, resistant to virus E79. Has no phosphomannomutase nor phosphoglucomutase activities (PubMed:7515870, PubMed:8050998). Does not make rhamnolipid (PubMed:10481091).</text>
</comment>
<comment type="miscellaneous">
    <text evidence="16 17 18">Most crystals have Zn(2+) rather than Mg(2+) and are catalytically inactive.</text>
</comment>
<comment type="similarity">
    <text evidence="14">Belongs to the phosphohexose mutase family.</text>
</comment>
<proteinExistence type="evidence at protein level"/>
<gene>
    <name type="primary">algC</name>
    <name type="ordered locus">PA5322</name>
</gene>
<keyword id="KW-0002">3D-structure</keyword>
<keyword id="KW-0016">Alginate biosynthesis</keyword>
<keyword id="KW-0903">Direct protein sequencing</keyword>
<keyword id="KW-0413">Isomerase</keyword>
<keyword id="KW-0448">Lipopolysaccharide biosynthesis</keyword>
<keyword id="KW-0460">Magnesium</keyword>
<keyword id="KW-0479">Metal-binding</keyword>
<keyword id="KW-0511">Multifunctional enzyme</keyword>
<keyword id="KW-0597">Phosphoprotein</keyword>
<keyword id="KW-1185">Reference proteome</keyword>
<keyword id="KW-0843">Virulence</keyword>
<sequence length="463" mass="50296">MSTAKAPTLPASIFRAYDIRGVVGDTLTAETAYWIGRAIGSESLARGEPCVAVGRDGRLSGPELVKQLIQGLVDCGCQVSDVGMVPTPVLYYAANVLEGKSGVMLTGSHNPPDYNGFKIVVAGETLANEQIQALRERIEKNDLASGVGSVEQVDILPRYFKQIRDDIAMAKPMKVVVDCGNGVAGVIAPQLIEALGCSVIPLYCEVDGNFPNHHPDPGKPENLKDLIAKVKAENADLGLAFDGDGDRVGVVTNTGTIIYPDRLLMLFAKDVVSRNPGADIIFDVKCTRRLIALISGYGGRPVMWKTGHSLIKKKMKETGALLAGEMSGHVFFKERWFGFDDGIYSAARLLEILSQDQRDSEHVFSAFPSDISTPEINITVTEDSKFAIIEALQRDAQWGEGNITTLDGVRVDYPKGWGLVRASNTTPVLVLRFEADTEEELERIKTVFRNQLKAVDSSLPVPF</sequence>
<organism>
    <name type="scientific">Pseudomonas aeruginosa (strain ATCC 15692 / DSM 22644 / CIP 104116 / JCM 14847 / LMG 12228 / 1C / PRS 101 / PAO1)</name>
    <dbReference type="NCBI Taxonomy" id="208964"/>
    <lineage>
        <taxon>Bacteria</taxon>
        <taxon>Pseudomonadati</taxon>
        <taxon>Pseudomonadota</taxon>
        <taxon>Gammaproteobacteria</taxon>
        <taxon>Pseudomonadales</taxon>
        <taxon>Pseudomonadaceae</taxon>
        <taxon>Pseudomonas</taxon>
    </lineage>
</organism>
<protein>
    <recommendedName>
        <fullName>Phosphomannomutase/phosphoglucomutase</fullName>
        <shortName>PMM / PGM</shortName>
        <ecNumber evidence="13">5.4.2.2</ecNumber>
        <ecNumber evidence="13">5.4.2.8</ecNumber>
    </recommendedName>
</protein>
<name>ALGC_PSEAE</name>